<accession>A9M393</accession>
<protein>
    <recommendedName>
        <fullName evidence="1">Nucleotide-binding protein NMCC_0698</fullName>
    </recommendedName>
</protein>
<sequence>MKIVLISGLSGSGKSVALRQMEDSGYFCVDNLPLEMLPALVSYHIERADETELAVSVDVRSGIDIGQAREQIAYLRGLGHRVEVLFVEAEESVLVRRFSETRRGHPLSNQDMTLLESLKKEREWLFPLKEIAYCIDTSKMNAQQLRHAVRQWLKVERTGLLVILESFGFKYGVPNNADFMFDMRSLPNPYYDPELRPYTGMDKPVWDYLDGQPLVQEMVDDIEKFLTHWLPRLEDESRSYVTVAIGCTGGQHRSVYVVEKLARRLKGRYELLIRHRQAQNLPSR</sequence>
<comment type="function">
    <text evidence="1">Displays ATPase and GTPase activities.</text>
</comment>
<comment type="similarity">
    <text evidence="1">Belongs to the RapZ-like family.</text>
</comment>
<comment type="sequence caution" evidence="2">
    <conflict type="erroneous initiation">
        <sequence resource="EMBL-CDS" id="ABX72893"/>
    </conflict>
</comment>
<feature type="chain" id="PRO_0000383273" description="Nucleotide-binding protein NMCC_0698">
    <location>
        <begin position="1"/>
        <end position="284"/>
    </location>
</feature>
<feature type="binding site" evidence="1">
    <location>
        <begin position="8"/>
        <end position="15"/>
    </location>
    <ligand>
        <name>ATP</name>
        <dbReference type="ChEBI" id="CHEBI:30616"/>
    </ligand>
</feature>
<feature type="binding site" evidence="1">
    <location>
        <begin position="58"/>
        <end position="61"/>
    </location>
    <ligand>
        <name>GTP</name>
        <dbReference type="ChEBI" id="CHEBI:37565"/>
    </ligand>
</feature>
<gene>
    <name type="ordered locus">NMCC_0698</name>
</gene>
<keyword id="KW-0067">ATP-binding</keyword>
<keyword id="KW-0342">GTP-binding</keyword>
<keyword id="KW-0547">Nucleotide-binding</keyword>
<reference key="1">
    <citation type="journal article" date="2008" name="Genomics">
        <title>Characterization of ST-4821 complex, a unique Neisseria meningitidis clone.</title>
        <authorList>
            <person name="Peng J."/>
            <person name="Yang L."/>
            <person name="Yang F."/>
            <person name="Yang J."/>
            <person name="Yan Y."/>
            <person name="Nie H."/>
            <person name="Zhang X."/>
            <person name="Xiong Z."/>
            <person name="Jiang Y."/>
            <person name="Cheng F."/>
            <person name="Xu X."/>
            <person name="Chen S."/>
            <person name="Sun L."/>
            <person name="Li W."/>
            <person name="Shen Y."/>
            <person name="Shao Z."/>
            <person name="Liang X."/>
            <person name="Xu J."/>
            <person name="Jin Q."/>
        </authorList>
    </citation>
    <scope>NUCLEOTIDE SEQUENCE [LARGE SCALE GENOMIC DNA]</scope>
    <source>
        <strain>053442</strain>
    </source>
</reference>
<dbReference type="EMBL" id="CP000381">
    <property type="protein sequence ID" value="ABX72893.1"/>
    <property type="status" value="ALT_INIT"/>
    <property type="molecule type" value="Genomic_DNA"/>
</dbReference>
<dbReference type="SMR" id="A9M393"/>
<dbReference type="KEGG" id="nmn:NMCC_0698"/>
<dbReference type="HOGENOM" id="CLU_059558_1_1_4"/>
<dbReference type="Proteomes" id="UP000001177">
    <property type="component" value="Chromosome"/>
</dbReference>
<dbReference type="GO" id="GO:0005524">
    <property type="term" value="F:ATP binding"/>
    <property type="evidence" value="ECO:0007669"/>
    <property type="project" value="UniProtKB-UniRule"/>
</dbReference>
<dbReference type="GO" id="GO:0005525">
    <property type="term" value="F:GTP binding"/>
    <property type="evidence" value="ECO:0007669"/>
    <property type="project" value="UniProtKB-UniRule"/>
</dbReference>
<dbReference type="HAMAP" id="MF_00636">
    <property type="entry name" value="RapZ_like"/>
    <property type="match status" value="1"/>
</dbReference>
<dbReference type="InterPro" id="IPR027417">
    <property type="entry name" value="P-loop_NTPase"/>
</dbReference>
<dbReference type="InterPro" id="IPR005337">
    <property type="entry name" value="RapZ-like"/>
</dbReference>
<dbReference type="InterPro" id="IPR053930">
    <property type="entry name" value="RapZ-like_N"/>
</dbReference>
<dbReference type="InterPro" id="IPR053931">
    <property type="entry name" value="RapZ_C"/>
</dbReference>
<dbReference type="NCBIfam" id="NF003828">
    <property type="entry name" value="PRK05416.1"/>
    <property type="match status" value="1"/>
</dbReference>
<dbReference type="PANTHER" id="PTHR30448">
    <property type="entry name" value="RNASE ADAPTER PROTEIN RAPZ"/>
    <property type="match status" value="1"/>
</dbReference>
<dbReference type="PANTHER" id="PTHR30448:SF0">
    <property type="entry name" value="RNASE ADAPTER PROTEIN RAPZ"/>
    <property type="match status" value="1"/>
</dbReference>
<dbReference type="Pfam" id="PF22740">
    <property type="entry name" value="PapZ_C"/>
    <property type="match status" value="1"/>
</dbReference>
<dbReference type="Pfam" id="PF03668">
    <property type="entry name" value="RapZ-like_N"/>
    <property type="match status" value="1"/>
</dbReference>
<dbReference type="PIRSF" id="PIRSF005052">
    <property type="entry name" value="P-loopkin"/>
    <property type="match status" value="1"/>
</dbReference>
<dbReference type="SUPFAM" id="SSF52540">
    <property type="entry name" value="P-loop containing nucleoside triphosphate hydrolases"/>
    <property type="match status" value="1"/>
</dbReference>
<evidence type="ECO:0000255" key="1">
    <source>
        <dbReference type="HAMAP-Rule" id="MF_00636"/>
    </source>
</evidence>
<evidence type="ECO:0000305" key="2"/>
<proteinExistence type="inferred from homology"/>
<organism>
    <name type="scientific">Neisseria meningitidis serogroup C (strain 053442)</name>
    <dbReference type="NCBI Taxonomy" id="374833"/>
    <lineage>
        <taxon>Bacteria</taxon>
        <taxon>Pseudomonadati</taxon>
        <taxon>Pseudomonadota</taxon>
        <taxon>Betaproteobacteria</taxon>
        <taxon>Neisseriales</taxon>
        <taxon>Neisseriaceae</taxon>
        <taxon>Neisseria</taxon>
    </lineage>
</organism>
<name>Y698_NEIM0</name>